<reference key="1">
    <citation type="journal article" date="1998" name="Nature">
        <title>The complete genome of the hyperthermophilic bacterium Aquifex aeolicus.</title>
        <authorList>
            <person name="Deckert G."/>
            <person name="Warren P.V."/>
            <person name="Gaasterland T."/>
            <person name="Young W.G."/>
            <person name="Lenox A.L."/>
            <person name="Graham D.E."/>
            <person name="Overbeek R."/>
            <person name="Snead M.A."/>
            <person name="Keller M."/>
            <person name="Aujay M."/>
            <person name="Huber R."/>
            <person name="Feldman R.A."/>
            <person name="Short J.M."/>
            <person name="Olsen G.J."/>
            <person name="Swanson R.V."/>
        </authorList>
    </citation>
    <scope>NUCLEOTIDE SEQUENCE [LARGE SCALE GENOMIC DNA]</scope>
    <source>
        <strain>VF5</strain>
    </source>
</reference>
<protein>
    <recommendedName>
        <fullName>Imidazole glycerol phosphate synthase subunit HisF</fullName>
        <ecNumber>4.3.2.10</ecNumber>
    </recommendedName>
    <alternativeName>
        <fullName>IGP synthase cyclase subunit</fullName>
    </alternativeName>
    <alternativeName>
        <fullName>IGP synthase subunit HisF</fullName>
    </alternativeName>
    <alternativeName>
        <fullName>ImGP synthase subunit HisF</fullName>
        <shortName>IGPS subunit HisF</shortName>
    </alternativeName>
</protein>
<feature type="chain" id="PRO_0000142108" description="Imidazole glycerol phosphate synthase subunit HisF">
    <location>
        <begin position="1"/>
        <end position="253"/>
    </location>
</feature>
<feature type="active site" evidence="2">
    <location>
        <position position="11"/>
    </location>
</feature>
<feature type="active site" evidence="2">
    <location>
        <position position="130"/>
    </location>
</feature>
<evidence type="ECO:0000250" key="1"/>
<evidence type="ECO:0000255" key="2"/>
<evidence type="ECO:0000305" key="3"/>
<organism>
    <name type="scientific">Aquifex aeolicus (strain VF5)</name>
    <dbReference type="NCBI Taxonomy" id="224324"/>
    <lineage>
        <taxon>Bacteria</taxon>
        <taxon>Pseudomonadati</taxon>
        <taxon>Aquificota</taxon>
        <taxon>Aquificia</taxon>
        <taxon>Aquificales</taxon>
        <taxon>Aquificaceae</taxon>
        <taxon>Aquifex</taxon>
    </lineage>
</organism>
<dbReference type="EC" id="4.3.2.10"/>
<dbReference type="EMBL" id="AE000657">
    <property type="protein sequence ID" value="AAC06520.1"/>
    <property type="molecule type" value="Genomic_DNA"/>
</dbReference>
<dbReference type="PIR" id="C70317">
    <property type="entry name" value="C70317"/>
</dbReference>
<dbReference type="RefSeq" id="NP_213127.1">
    <property type="nucleotide sequence ID" value="NC_000918.1"/>
</dbReference>
<dbReference type="RefSeq" id="WP_010880065.1">
    <property type="nucleotide sequence ID" value="NC_000918.1"/>
</dbReference>
<dbReference type="SMR" id="O66567"/>
<dbReference type="FunCoup" id="O66567">
    <property type="interactions" value="470"/>
</dbReference>
<dbReference type="STRING" id="224324.aq_181"/>
<dbReference type="EnsemblBacteria" id="AAC06520">
    <property type="protein sequence ID" value="AAC06520"/>
    <property type="gene ID" value="aq_181"/>
</dbReference>
<dbReference type="KEGG" id="aae:aq_181"/>
<dbReference type="PATRIC" id="fig|224324.8.peg.157"/>
<dbReference type="eggNOG" id="COG0107">
    <property type="taxonomic scope" value="Bacteria"/>
</dbReference>
<dbReference type="HOGENOM" id="CLU_048577_4_0_0"/>
<dbReference type="InParanoid" id="O66567"/>
<dbReference type="OrthoDB" id="9781903at2"/>
<dbReference type="UniPathway" id="UPA00031">
    <property type="reaction ID" value="UER00010"/>
</dbReference>
<dbReference type="Proteomes" id="UP000000798">
    <property type="component" value="Chromosome"/>
</dbReference>
<dbReference type="GO" id="GO:0005737">
    <property type="term" value="C:cytoplasm"/>
    <property type="evidence" value="ECO:0007669"/>
    <property type="project" value="UniProtKB-SubCell"/>
</dbReference>
<dbReference type="GO" id="GO:0000107">
    <property type="term" value="F:imidazoleglycerol-phosphate synthase activity"/>
    <property type="evidence" value="ECO:0000318"/>
    <property type="project" value="GO_Central"/>
</dbReference>
<dbReference type="GO" id="GO:0016833">
    <property type="term" value="F:oxo-acid-lyase activity"/>
    <property type="evidence" value="ECO:0007669"/>
    <property type="project" value="InterPro"/>
</dbReference>
<dbReference type="GO" id="GO:0000105">
    <property type="term" value="P:L-histidine biosynthetic process"/>
    <property type="evidence" value="ECO:0007669"/>
    <property type="project" value="UniProtKB-UniRule"/>
</dbReference>
<dbReference type="CDD" id="cd04731">
    <property type="entry name" value="HisF"/>
    <property type="match status" value="1"/>
</dbReference>
<dbReference type="FunFam" id="3.20.20.70:FF:000006">
    <property type="entry name" value="Imidazole glycerol phosphate synthase subunit HisF"/>
    <property type="match status" value="1"/>
</dbReference>
<dbReference type="Gene3D" id="3.20.20.70">
    <property type="entry name" value="Aldolase class I"/>
    <property type="match status" value="1"/>
</dbReference>
<dbReference type="HAMAP" id="MF_01013">
    <property type="entry name" value="HisF"/>
    <property type="match status" value="1"/>
</dbReference>
<dbReference type="InterPro" id="IPR013785">
    <property type="entry name" value="Aldolase_TIM"/>
</dbReference>
<dbReference type="InterPro" id="IPR020021">
    <property type="entry name" value="Glycosyl_amidation-assoc_WbuZ"/>
</dbReference>
<dbReference type="InterPro" id="IPR006062">
    <property type="entry name" value="His_biosynth"/>
</dbReference>
<dbReference type="InterPro" id="IPR004651">
    <property type="entry name" value="HisF"/>
</dbReference>
<dbReference type="InterPro" id="IPR050064">
    <property type="entry name" value="IGPS_HisA/HisF"/>
</dbReference>
<dbReference type="InterPro" id="IPR011060">
    <property type="entry name" value="RibuloseP-bd_barrel"/>
</dbReference>
<dbReference type="NCBIfam" id="TIGR00735">
    <property type="entry name" value="hisF"/>
    <property type="match status" value="1"/>
</dbReference>
<dbReference type="NCBIfam" id="TIGR03572">
    <property type="entry name" value="WbuZ"/>
    <property type="match status" value="1"/>
</dbReference>
<dbReference type="PANTHER" id="PTHR21235:SF2">
    <property type="entry name" value="IMIDAZOLE GLYCEROL PHOSPHATE SYNTHASE HISHF"/>
    <property type="match status" value="1"/>
</dbReference>
<dbReference type="PANTHER" id="PTHR21235">
    <property type="entry name" value="IMIDAZOLE GLYCEROL PHOSPHATE SYNTHASE SUBUNIT HISF/H IGP SYNTHASE SUBUNIT HISF/H"/>
    <property type="match status" value="1"/>
</dbReference>
<dbReference type="Pfam" id="PF00977">
    <property type="entry name" value="His_biosynth"/>
    <property type="match status" value="1"/>
</dbReference>
<dbReference type="SUPFAM" id="SSF51366">
    <property type="entry name" value="Ribulose-phoshate binding barrel"/>
    <property type="match status" value="1"/>
</dbReference>
<proteinExistence type="inferred from homology"/>
<comment type="function">
    <text evidence="1">IGPS catalyzes the conversion of PRFAR and glutamine to IGP, AICAR and glutamate. The HisF subunit catalyzes the cyclization activity that produces IGP and AICAR from PRFAR using the ammonia provided by the HisH subunit (By similarity).</text>
</comment>
<comment type="catalytic activity">
    <reaction>
        <text>5-[(5-phospho-1-deoxy-D-ribulos-1-ylimino)methylamino]-1-(5-phospho-beta-D-ribosyl)imidazole-4-carboxamide + L-glutamine = D-erythro-1-(imidazol-4-yl)glycerol 3-phosphate + 5-amino-1-(5-phospho-beta-D-ribosyl)imidazole-4-carboxamide + L-glutamate + H(+)</text>
        <dbReference type="Rhea" id="RHEA:24793"/>
        <dbReference type="ChEBI" id="CHEBI:15378"/>
        <dbReference type="ChEBI" id="CHEBI:29985"/>
        <dbReference type="ChEBI" id="CHEBI:58278"/>
        <dbReference type="ChEBI" id="CHEBI:58359"/>
        <dbReference type="ChEBI" id="CHEBI:58475"/>
        <dbReference type="ChEBI" id="CHEBI:58525"/>
        <dbReference type="EC" id="4.3.2.10"/>
    </reaction>
</comment>
<comment type="pathway">
    <text>Amino-acid biosynthesis; L-histidine biosynthesis; L-histidine from 5-phospho-alpha-D-ribose 1-diphosphate: step 5/9.</text>
</comment>
<comment type="subunit">
    <text evidence="1">Heterodimer of HisH and HisF.</text>
</comment>
<comment type="subcellular location">
    <subcellularLocation>
        <location evidence="1">Cytoplasm</location>
    </subcellularLocation>
</comment>
<comment type="similarity">
    <text evidence="3">Belongs to the HisA/HisF family.</text>
</comment>
<accession>O66567</accession>
<gene>
    <name type="primary">hisF</name>
    <name type="ordered locus">aq_181</name>
</gene>
<sequence length="253" mass="27796">MLAKRIIPCLDVDKGRVVKGVKFLNLRDAGDPVEVAKRYEEEGADELVFLDITASAEDREIMIDVVKKVAETVFMPFTVGGGIRSLEDMRRLLEAGADKISINTAAVKNPNLIYEGAKRFGSQCIVVAIDAKRKGNSWEVYIHGGRTPTGLDAVEWAKKVESLGAGEILLTSMDRDGTKDGYDIELNRAISEAVNIPVIASGGAGKKEHFYEVFSKTKVEAALAASVFHFREISIPELKEYLLERGINVRPLD</sequence>
<name>HIS6_AQUAE</name>
<keyword id="KW-0028">Amino-acid biosynthesis</keyword>
<keyword id="KW-0963">Cytoplasm</keyword>
<keyword id="KW-0368">Histidine biosynthesis</keyword>
<keyword id="KW-0456">Lyase</keyword>
<keyword id="KW-1185">Reference proteome</keyword>